<evidence type="ECO:0000255" key="1">
    <source>
        <dbReference type="HAMAP-Rule" id="MF_00139"/>
    </source>
</evidence>
<evidence type="ECO:0000255" key="2">
    <source>
        <dbReference type="PROSITE-ProRule" id="PRU01202"/>
    </source>
</evidence>
<name>PUR9_SHIFL</name>
<keyword id="KW-0007">Acetylation</keyword>
<keyword id="KW-0378">Hydrolase</keyword>
<keyword id="KW-0511">Multifunctional enzyme</keyword>
<keyword id="KW-0658">Purine biosynthesis</keyword>
<keyword id="KW-1185">Reference proteome</keyword>
<keyword id="KW-0808">Transferase</keyword>
<accession>Q83IR9</accession>
<accession>Q7BZI4</accession>
<sequence length="529" mass="57358">MQQRRPVRRALLSVSDKAGIVEFAQALSARGVELLSTGGTARLLAEKGLPVTEVSDYTGFPEMMDGRVKTLHPKVHGGILGRRGQDDAIMEEHQIQPIDMVVVNLYPFAQTVAREGCSLEDAVENIDIGGPTMVRSAAKNHKDVAIVVKSSDYDAIIKEMDDNEGSLTLATRFDLAIKAFEHTAAYDSMIANYFGSMVPAYHGESKEAAGRFPRTLNLNFIKKQDMRYGENSHQQAAFYIEENVKEASVATATQVQGKALSYNNIADTDAALECVKEFAEPACVIVKHANPCGVAIGNSILDAYDRAYKTDPTSAFGGIIAFNRELDAETAQAIISRQFVEVIIAPSASEEALKITAAKQNVRVLTCGQWGERVPGLDFKRVNGGLLVQDRDLGMVGAEELRVVTQRQPTEQELRDALFCWKVAKFVKSNAIVYAKNNMTIGIGAGQMSRVYSAKIAGIKAADEGLEVKGSSMASDAFFPFRDGIDAAAAAGVTCVIQPGGSIRDDEVIAAADEHGIAMLFTDMRHFRH</sequence>
<comment type="catalytic activity">
    <reaction evidence="1">
        <text>(6R)-10-formyltetrahydrofolate + 5-amino-1-(5-phospho-beta-D-ribosyl)imidazole-4-carboxamide = 5-formamido-1-(5-phospho-D-ribosyl)imidazole-4-carboxamide + (6S)-5,6,7,8-tetrahydrofolate</text>
        <dbReference type="Rhea" id="RHEA:22192"/>
        <dbReference type="ChEBI" id="CHEBI:57453"/>
        <dbReference type="ChEBI" id="CHEBI:58467"/>
        <dbReference type="ChEBI" id="CHEBI:58475"/>
        <dbReference type="ChEBI" id="CHEBI:195366"/>
        <dbReference type="EC" id="2.1.2.3"/>
    </reaction>
</comment>
<comment type="catalytic activity">
    <reaction evidence="1">
        <text>IMP + H2O = 5-formamido-1-(5-phospho-D-ribosyl)imidazole-4-carboxamide</text>
        <dbReference type="Rhea" id="RHEA:18445"/>
        <dbReference type="ChEBI" id="CHEBI:15377"/>
        <dbReference type="ChEBI" id="CHEBI:58053"/>
        <dbReference type="ChEBI" id="CHEBI:58467"/>
        <dbReference type="EC" id="3.5.4.10"/>
    </reaction>
</comment>
<comment type="pathway">
    <text evidence="1">Purine metabolism; IMP biosynthesis via de novo pathway; 5-formamido-1-(5-phospho-D-ribosyl)imidazole-4-carboxamide from 5-amino-1-(5-phospho-D-ribosyl)imidazole-4-carboxamide (10-formyl THF route): step 1/1.</text>
</comment>
<comment type="pathway">
    <text evidence="1">Purine metabolism; IMP biosynthesis via de novo pathway; IMP from 5-formamido-1-(5-phospho-D-ribosyl)imidazole-4-carboxamide: step 1/1.</text>
</comment>
<comment type="domain">
    <text evidence="1">The IMP cyclohydrolase activity resides in the N-terminal region.</text>
</comment>
<comment type="similarity">
    <text evidence="1">Belongs to the PurH family.</text>
</comment>
<dbReference type="EC" id="2.1.2.3" evidence="1"/>
<dbReference type="EC" id="3.5.4.10" evidence="1"/>
<dbReference type="EMBL" id="AE005674">
    <property type="protein sequence ID" value="AAN45507.1"/>
    <property type="molecule type" value="Genomic_DNA"/>
</dbReference>
<dbReference type="EMBL" id="AE014073">
    <property type="protein sequence ID" value="AAP18694.1"/>
    <property type="molecule type" value="Genomic_DNA"/>
</dbReference>
<dbReference type="RefSeq" id="NP_709800.1">
    <property type="nucleotide sequence ID" value="NC_004337.2"/>
</dbReference>
<dbReference type="RefSeq" id="WP_001187566.1">
    <property type="nucleotide sequence ID" value="NZ_WPGW01000040.1"/>
</dbReference>
<dbReference type="SMR" id="Q83IR9"/>
<dbReference type="STRING" id="198214.SF4078"/>
<dbReference type="PaxDb" id="198214-SF4078"/>
<dbReference type="GeneID" id="1023556"/>
<dbReference type="KEGG" id="sfl:SF4078"/>
<dbReference type="KEGG" id="sfx:S3657"/>
<dbReference type="PATRIC" id="fig|198214.7.peg.4803"/>
<dbReference type="HOGENOM" id="CLU_016316_5_2_6"/>
<dbReference type="UniPathway" id="UPA00074">
    <property type="reaction ID" value="UER00133"/>
</dbReference>
<dbReference type="UniPathway" id="UPA00074">
    <property type="reaction ID" value="UER00135"/>
</dbReference>
<dbReference type="Proteomes" id="UP000001006">
    <property type="component" value="Chromosome"/>
</dbReference>
<dbReference type="Proteomes" id="UP000002673">
    <property type="component" value="Chromosome"/>
</dbReference>
<dbReference type="GO" id="GO:0005829">
    <property type="term" value="C:cytosol"/>
    <property type="evidence" value="ECO:0007669"/>
    <property type="project" value="TreeGrafter"/>
</dbReference>
<dbReference type="GO" id="GO:0003937">
    <property type="term" value="F:IMP cyclohydrolase activity"/>
    <property type="evidence" value="ECO:0007669"/>
    <property type="project" value="UniProtKB-UniRule"/>
</dbReference>
<dbReference type="GO" id="GO:0004643">
    <property type="term" value="F:phosphoribosylaminoimidazolecarboxamide formyltransferase activity"/>
    <property type="evidence" value="ECO:0007669"/>
    <property type="project" value="UniProtKB-UniRule"/>
</dbReference>
<dbReference type="GO" id="GO:0006189">
    <property type="term" value="P:'de novo' IMP biosynthetic process"/>
    <property type="evidence" value="ECO:0007669"/>
    <property type="project" value="UniProtKB-UniRule"/>
</dbReference>
<dbReference type="CDD" id="cd01421">
    <property type="entry name" value="IMPCH"/>
    <property type="match status" value="1"/>
</dbReference>
<dbReference type="FunFam" id="3.40.140.20:FF:000001">
    <property type="entry name" value="Bifunctional purine biosynthesis protein PurH"/>
    <property type="match status" value="1"/>
</dbReference>
<dbReference type="FunFam" id="3.40.140.20:FF:000002">
    <property type="entry name" value="Bifunctional purine biosynthesis protein PurH"/>
    <property type="match status" value="1"/>
</dbReference>
<dbReference type="FunFam" id="3.40.50.1380:FF:000001">
    <property type="entry name" value="Bifunctional purine biosynthesis protein PurH"/>
    <property type="match status" value="1"/>
</dbReference>
<dbReference type="Gene3D" id="3.40.140.20">
    <property type="match status" value="2"/>
</dbReference>
<dbReference type="Gene3D" id="3.40.50.1380">
    <property type="entry name" value="Methylglyoxal synthase-like domain"/>
    <property type="match status" value="1"/>
</dbReference>
<dbReference type="HAMAP" id="MF_00139">
    <property type="entry name" value="PurH"/>
    <property type="match status" value="1"/>
</dbReference>
<dbReference type="InterPro" id="IPR024051">
    <property type="entry name" value="AICAR_Tfase_dup_dom_sf"/>
</dbReference>
<dbReference type="InterPro" id="IPR016193">
    <property type="entry name" value="Cytidine_deaminase-like"/>
</dbReference>
<dbReference type="InterPro" id="IPR011607">
    <property type="entry name" value="MGS-like_dom"/>
</dbReference>
<dbReference type="InterPro" id="IPR036914">
    <property type="entry name" value="MGS-like_dom_sf"/>
</dbReference>
<dbReference type="InterPro" id="IPR002695">
    <property type="entry name" value="PurH-like"/>
</dbReference>
<dbReference type="NCBIfam" id="NF002049">
    <property type="entry name" value="PRK00881.1"/>
    <property type="match status" value="1"/>
</dbReference>
<dbReference type="NCBIfam" id="TIGR00355">
    <property type="entry name" value="purH"/>
    <property type="match status" value="1"/>
</dbReference>
<dbReference type="PANTHER" id="PTHR11692:SF0">
    <property type="entry name" value="BIFUNCTIONAL PURINE BIOSYNTHESIS PROTEIN ATIC"/>
    <property type="match status" value="1"/>
</dbReference>
<dbReference type="PANTHER" id="PTHR11692">
    <property type="entry name" value="BIFUNCTIONAL PURINE BIOSYNTHESIS PROTEIN PURH"/>
    <property type="match status" value="1"/>
</dbReference>
<dbReference type="Pfam" id="PF01808">
    <property type="entry name" value="AICARFT_IMPCHas"/>
    <property type="match status" value="1"/>
</dbReference>
<dbReference type="Pfam" id="PF02142">
    <property type="entry name" value="MGS"/>
    <property type="match status" value="1"/>
</dbReference>
<dbReference type="PIRSF" id="PIRSF000414">
    <property type="entry name" value="AICARFT_IMPCHas"/>
    <property type="match status" value="1"/>
</dbReference>
<dbReference type="SMART" id="SM00798">
    <property type="entry name" value="AICARFT_IMPCHas"/>
    <property type="match status" value="1"/>
</dbReference>
<dbReference type="SMART" id="SM00851">
    <property type="entry name" value="MGS"/>
    <property type="match status" value="1"/>
</dbReference>
<dbReference type="SUPFAM" id="SSF53927">
    <property type="entry name" value="Cytidine deaminase-like"/>
    <property type="match status" value="1"/>
</dbReference>
<dbReference type="SUPFAM" id="SSF52335">
    <property type="entry name" value="Methylglyoxal synthase-like"/>
    <property type="match status" value="1"/>
</dbReference>
<dbReference type="PROSITE" id="PS51855">
    <property type="entry name" value="MGS"/>
    <property type="match status" value="1"/>
</dbReference>
<feature type="chain" id="PRO_1000018957" description="Bifunctional purine biosynthesis protein PurH">
    <location>
        <begin position="1"/>
        <end position="529"/>
    </location>
</feature>
<feature type="domain" description="MGS-like" evidence="2">
    <location>
        <begin position="1"/>
        <end position="148"/>
    </location>
</feature>
<feature type="modified residue" description="N6-acetyllysine" evidence="1">
    <location>
        <position position="287"/>
    </location>
</feature>
<reference key="1">
    <citation type="journal article" date="2002" name="Nucleic Acids Res.">
        <title>Genome sequence of Shigella flexneri 2a: insights into pathogenicity through comparison with genomes of Escherichia coli K12 and O157.</title>
        <authorList>
            <person name="Jin Q."/>
            <person name="Yuan Z."/>
            <person name="Xu J."/>
            <person name="Wang Y."/>
            <person name="Shen Y."/>
            <person name="Lu W."/>
            <person name="Wang J."/>
            <person name="Liu H."/>
            <person name="Yang J."/>
            <person name="Yang F."/>
            <person name="Zhang X."/>
            <person name="Zhang J."/>
            <person name="Yang G."/>
            <person name="Wu H."/>
            <person name="Qu D."/>
            <person name="Dong J."/>
            <person name="Sun L."/>
            <person name="Xue Y."/>
            <person name="Zhao A."/>
            <person name="Gao Y."/>
            <person name="Zhu J."/>
            <person name="Kan B."/>
            <person name="Ding K."/>
            <person name="Chen S."/>
            <person name="Cheng H."/>
            <person name="Yao Z."/>
            <person name="He B."/>
            <person name="Chen R."/>
            <person name="Ma D."/>
            <person name="Qiang B."/>
            <person name="Wen Y."/>
            <person name="Hou Y."/>
            <person name="Yu J."/>
        </authorList>
    </citation>
    <scope>NUCLEOTIDE SEQUENCE [LARGE SCALE GENOMIC DNA]</scope>
    <source>
        <strain>301 / Serotype 2a</strain>
    </source>
</reference>
<reference key="2">
    <citation type="journal article" date="2003" name="Infect. Immun.">
        <title>Complete genome sequence and comparative genomics of Shigella flexneri serotype 2a strain 2457T.</title>
        <authorList>
            <person name="Wei J."/>
            <person name="Goldberg M.B."/>
            <person name="Burland V."/>
            <person name="Venkatesan M.M."/>
            <person name="Deng W."/>
            <person name="Fournier G."/>
            <person name="Mayhew G.F."/>
            <person name="Plunkett G. III"/>
            <person name="Rose D.J."/>
            <person name="Darling A."/>
            <person name="Mau B."/>
            <person name="Perna N.T."/>
            <person name="Payne S.M."/>
            <person name="Runyen-Janecky L.J."/>
            <person name="Zhou S."/>
            <person name="Schwartz D.C."/>
            <person name="Blattner F.R."/>
        </authorList>
    </citation>
    <scope>NUCLEOTIDE SEQUENCE [LARGE SCALE GENOMIC DNA]</scope>
    <source>
        <strain>ATCC 700930 / 2457T / Serotype 2a</strain>
    </source>
</reference>
<proteinExistence type="inferred from homology"/>
<organism>
    <name type="scientific">Shigella flexneri</name>
    <dbReference type="NCBI Taxonomy" id="623"/>
    <lineage>
        <taxon>Bacteria</taxon>
        <taxon>Pseudomonadati</taxon>
        <taxon>Pseudomonadota</taxon>
        <taxon>Gammaproteobacteria</taxon>
        <taxon>Enterobacterales</taxon>
        <taxon>Enterobacteriaceae</taxon>
        <taxon>Shigella</taxon>
    </lineage>
</organism>
<gene>
    <name evidence="1" type="primary">purH</name>
    <name type="ordered locus">SF4078</name>
    <name type="ordered locus">S3657</name>
</gene>
<protein>
    <recommendedName>
        <fullName evidence="1">Bifunctional purine biosynthesis protein PurH</fullName>
    </recommendedName>
    <domain>
        <recommendedName>
            <fullName evidence="1">Phosphoribosylaminoimidazolecarboxamide formyltransferase</fullName>
            <ecNumber evidence="1">2.1.2.3</ecNumber>
        </recommendedName>
        <alternativeName>
            <fullName evidence="1">AICAR transformylase</fullName>
        </alternativeName>
    </domain>
    <domain>
        <recommendedName>
            <fullName evidence="1">IMP cyclohydrolase</fullName>
            <ecNumber evidence="1">3.5.4.10</ecNumber>
        </recommendedName>
        <alternativeName>
            <fullName evidence="1">ATIC</fullName>
        </alternativeName>
        <alternativeName>
            <fullName evidence="1">IMP synthase</fullName>
        </alternativeName>
        <alternativeName>
            <fullName evidence="1">Inosinicase</fullName>
        </alternativeName>
    </domain>
</protein>